<accession>Q9X0Y2</accession>
<dbReference type="EC" id="2.6.1.1"/>
<dbReference type="EMBL" id="AE000512">
    <property type="protein sequence ID" value="AAD36330.1"/>
    <property type="molecule type" value="Genomic_DNA"/>
</dbReference>
<dbReference type="PIR" id="B72275">
    <property type="entry name" value="B72275"/>
</dbReference>
<dbReference type="RefSeq" id="NP_229060.1">
    <property type="nucleotide sequence ID" value="NC_000853.1"/>
</dbReference>
<dbReference type="RefSeq" id="WP_004080007.1">
    <property type="nucleotide sequence ID" value="NC_000853.1"/>
</dbReference>
<dbReference type="PDB" id="1O4S">
    <property type="method" value="X-ray"/>
    <property type="resolution" value="1.90 A"/>
    <property type="chains" value="A/B=1-377"/>
</dbReference>
<dbReference type="PDBsum" id="1O4S"/>
<dbReference type="SMR" id="Q9X0Y2"/>
<dbReference type="FunCoup" id="Q9X0Y2">
    <property type="interactions" value="348"/>
</dbReference>
<dbReference type="STRING" id="243274.TM_1255"/>
<dbReference type="PaxDb" id="243274-THEMA_08060"/>
<dbReference type="EnsemblBacteria" id="AAD36330">
    <property type="protein sequence ID" value="AAD36330"/>
    <property type="gene ID" value="TM_1255"/>
</dbReference>
<dbReference type="KEGG" id="tma:TM1255"/>
<dbReference type="KEGG" id="tmi:THEMA_08060"/>
<dbReference type="KEGG" id="tmm:Tmari_1260"/>
<dbReference type="KEGG" id="tmw:THMA_1280"/>
<dbReference type="eggNOG" id="COG0436">
    <property type="taxonomic scope" value="Bacteria"/>
</dbReference>
<dbReference type="InParanoid" id="Q9X0Y2"/>
<dbReference type="OrthoDB" id="9802328at2"/>
<dbReference type="EvolutionaryTrace" id="Q9X0Y2"/>
<dbReference type="Proteomes" id="UP000008183">
    <property type="component" value="Chromosome"/>
</dbReference>
<dbReference type="GO" id="GO:0005737">
    <property type="term" value="C:cytoplasm"/>
    <property type="evidence" value="ECO:0007669"/>
    <property type="project" value="UniProtKB-SubCell"/>
</dbReference>
<dbReference type="GO" id="GO:0004069">
    <property type="term" value="F:L-aspartate:2-oxoglutarate aminotransferase activity"/>
    <property type="evidence" value="ECO:0007669"/>
    <property type="project" value="UniProtKB-EC"/>
</dbReference>
<dbReference type="GO" id="GO:0030170">
    <property type="term" value="F:pyridoxal phosphate binding"/>
    <property type="evidence" value="ECO:0007669"/>
    <property type="project" value="InterPro"/>
</dbReference>
<dbReference type="GO" id="GO:0008483">
    <property type="term" value="F:transaminase activity"/>
    <property type="evidence" value="ECO:0000318"/>
    <property type="project" value="GO_Central"/>
</dbReference>
<dbReference type="GO" id="GO:0006520">
    <property type="term" value="P:amino acid metabolic process"/>
    <property type="evidence" value="ECO:0007669"/>
    <property type="project" value="InterPro"/>
</dbReference>
<dbReference type="GO" id="GO:0009058">
    <property type="term" value="P:biosynthetic process"/>
    <property type="evidence" value="ECO:0007669"/>
    <property type="project" value="InterPro"/>
</dbReference>
<dbReference type="CDD" id="cd00609">
    <property type="entry name" value="AAT_like"/>
    <property type="match status" value="1"/>
</dbReference>
<dbReference type="FunFam" id="3.40.640.10:FF:000033">
    <property type="entry name" value="Aspartate aminotransferase"/>
    <property type="match status" value="1"/>
</dbReference>
<dbReference type="Gene3D" id="3.90.1150.10">
    <property type="entry name" value="Aspartate Aminotransferase, domain 1"/>
    <property type="match status" value="1"/>
</dbReference>
<dbReference type="Gene3D" id="3.40.640.10">
    <property type="entry name" value="Type I PLP-dependent aspartate aminotransferase-like (Major domain)"/>
    <property type="match status" value="1"/>
</dbReference>
<dbReference type="InterPro" id="IPR004839">
    <property type="entry name" value="Aminotransferase_I/II_large"/>
</dbReference>
<dbReference type="InterPro" id="IPR050596">
    <property type="entry name" value="AspAT/PAT-like"/>
</dbReference>
<dbReference type="InterPro" id="IPR004838">
    <property type="entry name" value="NHTrfase_class1_PyrdxlP-BS"/>
</dbReference>
<dbReference type="InterPro" id="IPR015424">
    <property type="entry name" value="PyrdxlP-dep_Trfase"/>
</dbReference>
<dbReference type="InterPro" id="IPR015421">
    <property type="entry name" value="PyrdxlP-dep_Trfase_major"/>
</dbReference>
<dbReference type="InterPro" id="IPR015422">
    <property type="entry name" value="PyrdxlP-dep_Trfase_small"/>
</dbReference>
<dbReference type="NCBIfam" id="NF041091">
    <property type="entry name" value="asp_aminotase_Arch"/>
    <property type="match status" value="1"/>
</dbReference>
<dbReference type="PANTHER" id="PTHR46383">
    <property type="entry name" value="ASPARTATE AMINOTRANSFERASE"/>
    <property type="match status" value="1"/>
</dbReference>
<dbReference type="PANTHER" id="PTHR46383:SF1">
    <property type="entry name" value="ASPARTATE AMINOTRANSFERASE"/>
    <property type="match status" value="1"/>
</dbReference>
<dbReference type="Pfam" id="PF00155">
    <property type="entry name" value="Aminotran_1_2"/>
    <property type="match status" value="1"/>
</dbReference>
<dbReference type="SUPFAM" id="SSF53383">
    <property type="entry name" value="PLP-dependent transferases"/>
    <property type="match status" value="1"/>
</dbReference>
<dbReference type="PROSITE" id="PS00105">
    <property type="entry name" value="AA_TRANSFER_CLASS_1"/>
    <property type="match status" value="1"/>
</dbReference>
<proteinExistence type="evidence at protein level"/>
<organism>
    <name type="scientific">Thermotoga maritima (strain ATCC 43589 / DSM 3109 / JCM 10099 / NBRC 100826 / MSB8)</name>
    <dbReference type="NCBI Taxonomy" id="243274"/>
    <lineage>
        <taxon>Bacteria</taxon>
        <taxon>Thermotogati</taxon>
        <taxon>Thermotogota</taxon>
        <taxon>Thermotogae</taxon>
        <taxon>Thermotogales</taxon>
        <taxon>Thermotogaceae</taxon>
        <taxon>Thermotoga</taxon>
    </lineage>
</organism>
<evidence type="ECO:0000250" key="1"/>
<evidence type="ECO:0000269" key="2">
    <source>
    </source>
</evidence>
<evidence type="ECO:0000305" key="3"/>
<evidence type="ECO:0007829" key="4">
    <source>
        <dbReference type="PDB" id="1O4S"/>
    </source>
</evidence>
<reference key="1">
    <citation type="journal article" date="1999" name="Nature">
        <title>Evidence for lateral gene transfer between Archaea and Bacteria from genome sequence of Thermotoga maritima.</title>
        <authorList>
            <person name="Nelson K.E."/>
            <person name="Clayton R.A."/>
            <person name="Gill S.R."/>
            <person name="Gwinn M.L."/>
            <person name="Dodson R.J."/>
            <person name="Haft D.H."/>
            <person name="Hickey E.K."/>
            <person name="Peterson J.D."/>
            <person name="Nelson W.C."/>
            <person name="Ketchum K.A."/>
            <person name="McDonald L.A."/>
            <person name="Utterback T.R."/>
            <person name="Malek J.A."/>
            <person name="Linher K.D."/>
            <person name="Garrett M.M."/>
            <person name="Stewart A.M."/>
            <person name="Cotton M.D."/>
            <person name="Pratt M.S."/>
            <person name="Phillips C.A."/>
            <person name="Richardson D.L."/>
            <person name="Heidelberg J.F."/>
            <person name="Sutton G.G."/>
            <person name="Fleischmann R.D."/>
            <person name="Eisen J.A."/>
            <person name="White O."/>
            <person name="Salzberg S.L."/>
            <person name="Smith H.O."/>
            <person name="Venter J.C."/>
            <person name="Fraser C.M."/>
        </authorList>
    </citation>
    <scope>NUCLEOTIDE SEQUENCE [LARGE SCALE GENOMIC DNA]</scope>
    <source>
        <strain>ATCC 43589 / DSM 3109 / JCM 10099 / NBRC 100826 / MSB8</strain>
    </source>
</reference>
<reference key="2">
    <citation type="journal article" date="2004" name="Proteins">
        <title>Crystal structure of an aspartate aminotransferase (TM1255) from Thermotoga maritima at 1.90 A resolution.</title>
        <authorList>
            <person name="Schwarzenbacher R."/>
            <person name="Jaroszewski L."/>
            <person name="von Delft F."/>
            <person name="Abdubek P."/>
            <person name="Ambing E."/>
            <person name="Biorac T."/>
            <person name="Brinen L.S."/>
            <person name="Canaves J.M."/>
            <person name="Cambell J."/>
            <person name="Chiu H.-J."/>
            <person name="Dai X."/>
            <person name="Deacon A.M."/>
            <person name="DiDonato M."/>
            <person name="Elsliger M.-A."/>
            <person name="Eshagi S."/>
            <person name="Floyd R."/>
            <person name="Godzik A."/>
            <person name="Grittini C."/>
            <person name="Grzechnik S.K."/>
            <person name="Hampton E."/>
            <person name="Karlak C."/>
            <person name="Klock H.E."/>
            <person name="Koesema E."/>
            <person name="Kovarik J.S."/>
            <person name="Kreusch A."/>
            <person name="Kuhn P."/>
            <person name="Lesley S.A."/>
            <person name="Levin I."/>
            <person name="McMullan D."/>
            <person name="McPhillips T.M."/>
            <person name="Miller M.D."/>
            <person name="Morse A."/>
            <person name="Moy K."/>
            <person name="Ouyang J."/>
            <person name="Page R."/>
            <person name="Quijano K."/>
            <person name="Robb A."/>
            <person name="Spraggon G."/>
            <person name="Stevens R.C."/>
            <person name="van den Bedem H."/>
            <person name="Velasquez J."/>
            <person name="Vincent J."/>
            <person name="Wang X."/>
            <person name="West B."/>
            <person name="Wolf G."/>
            <person name="Xu Q."/>
            <person name="Hodgson K.O."/>
            <person name="Wooley J."/>
            <person name="Wilson I.A."/>
        </authorList>
    </citation>
    <scope>X-RAY CRYSTALLOGRAPHY (1.9 ANGSTROMS) IN COMPLEX WITH PYRIDOXAL PHOSPHATE</scope>
    <scope>SUBUNIT</scope>
</reference>
<feature type="chain" id="PRO_0000123857" description="Aspartate aminotransferase">
    <location>
        <begin position="1"/>
        <end position="377"/>
    </location>
</feature>
<feature type="binding site" evidence="1">
    <location>
        <position position="37"/>
    </location>
    <ligand>
        <name>L-aspartate</name>
        <dbReference type="ChEBI" id="CHEBI:29991"/>
    </ligand>
</feature>
<feature type="binding site" evidence="1">
    <location>
        <position position="123"/>
    </location>
    <ligand>
        <name>L-aspartate</name>
        <dbReference type="ChEBI" id="CHEBI:29991"/>
    </ligand>
</feature>
<feature type="binding site" evidence="1">
    <location>
        <position position="173"/>
    </location>
    <ligand>
        <name>L-aspartate</name>
        <dbReference type="ChEBI" id="CHEBI:29991"/>
    </ligand>
</feature>
<feature type="binding site" evidence="1">
    <location>
        <position position="353"/>
    </location>
    <ligand>
        <name>L-aspartate</name>
        <dbReference type="ChEBI" id="CHEBI:29991"/>
    </ligand>
</feature>
<feature type="modified residue" description="N6-(pyridoxal phosphate)lysine">
    <location>
        <position position="234"/>
    </location>
</feature>
<feature type="helix" evidence="4">
    <location>
        <begin position="4"/>
        <end position="8"/>
    </location>
</feature>
<feature type="helix" evidence="4">
    <location>
        <begin position="15"/>
        <end position="26"/>
    </location>
</feature>
<feature type="helix" evidence="4">
    <location>
        <begin position="45"/>
        <end position="55"/>
    </location>
</feature>
<feature type="helix" evidence="4">
    <location>
        <begin position="69"/>
        <end position="83"/>
    </location>
</feature>
<feature type="helix" evidence="4">
    <location>
        <begin position="89"/>
        <end position="91"/>
    </location>
</feature>
<feature type="strand" evidence="4">
    <location>
        <begin position="92"/>
        <end position="96"/>
    </location>
</feature>
<feature type="helix" evidence="4">
    <location>
        <begin position="97"/>
        <end position="109"/>
    </location>
</feature>
<feature type="strand" evidence="4">
    <location>
        <begin position="115"/>
        <end position="121"/>
    </location>
</feature>
<feature type="helix" evidence="4">
    <location>
        <begin position="126"/>
        <end position="132"/>
    </location>
</feature>
<feature type="strand" evidence="4">
    <location>
        <begin position="136"/>
        <end position="141"/>
    </location>
</feature>
<feature type="helix" evidence="4">
    <location>
        <begin position="144"/>
        <end position="146"/>
    </location>
</feature>
<feature type="helix" evidence="4">
    <location>
        <begin position="152"/>
        <end position="157"/>
    </location>
</feature>
<feature type="strand" evidence="4">
    <location>
        <begin position="163"/>
        <end position="171"/>
    </location>
</feature>
<feature type="turn" evidence="4">
    <location>
        <begin position="173"/>
        <end position="175"/>
    </location>
</feature>
<feature type="helix" evidence="4">
    <location>
        <begin position="181"/>
        <end position="194"/>
    </location>
</feature>
<feature type="strand" evidence="4">
    <location>
        <begin position="197"/>
        <end position="201"/>
    </location>
</feature>
<feature type="turn" evidence="4">
    <location>
        <begin position="203"/>
        <end position="206"/>
    </location>
</feature>
<feature type="helix" evidence="4">
    <location>
        <begin position="216"/>
        <end position="219"/>
    </location>
</feature>
<feature type="strand" evidence="4">
    <location>
        <begin position="221"/>
        <end position="223"/>
    </location>
</feature>
<feature type="strand" evidence="4">
    <location>
        <begin position="226"/>
        <end position="232"/>
    </location>
</feature>
<feature type="turn" evidence="4">
    <location>
        <begin position="233"/>
        <end position="237"/>
    </location>
</feature>
<feature type="helix" evidence="4">
    <location>
        <begin position="239"/>
        <end position="241"/>
    </location>
</feature>
<feature type="strand" evidence="4">
    <location>
        <begin position="244"/>
        <end position="247"/>
    </location>
</feature>
<feature type="helix" evidence="4">
    <location>
        <begin position="250"/>
        <end position="263"/>
    </location>
</feature>
<feature type="helix" evidence="4">
    <location>
        <begin position="269"/>
        <end position="278"/>
    </location>
</feature>
<feature type="helix" evidence="4">
    <location>
        <begin position="284"/>
        <end position="303"/>
    </location>
</feature>
<feature type="strand" evidence="4">
    <location>
        <begin position="312"/>
        <end position="320"/>
    </location>
</feature>
<feature type="helix" evidence="4">
    <location>
        <begin position="325"/>
        <end position="336"/>
    </location>
</feature>
<feature type="helix" evidence="4">
    <location>
        <begin position="343"/>
        <end position="346"/>
    </location>
</feature>
<feature type="strand" evidence="4">
    <location>
        <begin position="351"/>
        <end position="355"/>
    </location>
</feature>
<feature type="helix" evidence="4">
    <location>
        <begin position="360"/>
        <end position="374"/>
    </location>
</feature>
<protein>
    <recommendedName>
        <fullName>Aspartate aminotransferase</fullName>
        <shortName>AspAT</shortName>
        <ecNumber>2.6.1.1</ecNumber>
    </recommendedName>
    <alternativeName>
        <fullName>Transaminase A</fullName>
    </alternativeName>
</protein>
<name>AAT_THEMA</name>
<keyword id="KW-0002">3D-structure</keyword>
<keyword id="KW-0032">Aminotransferase</keyword>
<keyword id="KW-0963">Cytoplasm</keyword>
<keyword id="KW-0663">Pyridoxal phosphate</keyword>
<keyword id="KW-1185">Reference proteome</keyword>
<keyword id="KW-0808">Transferase</keyword>
<sequence>MVSRRISEIPISKTMELDAKAKALIKKGEDVINLTAGEPDFPTPEPVVEEAVRFLQKGEVKYTDPRGIYELREGIAKRIGERYKKDISPDQVVVTNGAKQALFNAFMALLDPGDEVIVFSPVWVSYIPQIILAGGTVNVVETFMSKNFQPSLEEVEGLLVGKTKAVLINSPNNPTGVVYRREFLEGLVRLAKKRNFYIISDEVYDSLVYTDEFTSILDVSEGFDRIVYINGFSKSHSMTGWRVGYLISSEKVATAVSKIQSHTTSCINTVAQYAALKALEVDNSYMVQTFKERKNFVVERLKKMGVKFVEPEGAFYLFFKVRGDDVKFCERLLEEKKVALVPGSAFLKPGFVRLSFATSIERLTEALDRIEDFLNSR</sequence>
<comment type="catalytic activity">
    <reaction>
        <text>L-aspartate + 2-oxoglutarate = oxaloacetate + L-glutamate</text>
        <dbReference type="Rhea" id="RHEA:21824"/>
        <dbReference type="ChEBI" id="CHEBI:16452"/>
        <dbReference type="ChEBI" id="CHEBI:16810"/>
        <dbReference type="ChEBI" id="CHEBI:29985"/>
        <dbReference type="ChEBI" id="CHEBI:29991"/>
        <dbReference type="EC" id="2.6.1.1"/>
    </reaction>
</comment>
<comment type="cofactor">
    <cofactor>
        <name>pyridoxal 5'-phosphate</name>
        <dbReference type="ChEBI" id="CHEBI:597326"/>
    </cofactor>
</comment>
<comment type="subunit">
    <text evidence="2">Homodimer.</text>
</comment>
<comment type="subcellular location">
    <subcellularLocation>
        <location evidence="1">Cytoplasm</location>
    </subcellularLocation>
</comment>
<comment type="similarity">
    <text evidence="3">Belongs to the class-I pyridoxal-phosphate-dependent aminotransferase family.</text>
</comment>
<gene>
    <name type="primary">aspC</name>
    <name type="ordered locus">TM_1255</name>
</gene>